<protein>
    <recommendedName>
        <fullName>Probable WRKY transcription factor 50</fullName>
    </recommendedName>
    <alternativeName>
        <fullName>WRKY DNA-binding protein 50</fullName>
    </alternativeName>
</protein>
<dbReference type="EMBL" id="AY071847">
    <property type="protein sequence ID" value="AAL61857.1"/>
    <property type="molecule type" value="mRNA"/>
</dbReference>
<dbReference type="EMBL" id="AC005965">
    <property type="status" value="NOT_ANNOTATED_CDS"/>
    <property type="molecule type" value="Genomic_DNA"/>
</dbReference>
<dbReference type="EMBL" id="CP002688">
    <property type="protein sequence ID" value="AED93532.1"/>
    <property type="molecule type" value="Genomic_DNA"/>
</dbReference>
<dbReference type="RefSeq" id="NP_197989.2">
    <property type="nucleotide sequence ID" value="NM_122518.3"/>
</dbReference>
<dbReference type="SMR" id="Q8VWQ5"/>
<dbReference type="BioGRID" id="17961">
    <property type="interactions" value="1"/>
</dbReference>
<dbReference type="FunCoup" id="Q8VWQ5">
    <property type="interactions" value="1"/>
</dbReference>
<dbReference type="IntAct" id="Q8VWQ5">
    <property type="interactions" value="1"/>
</dbReference>
<dbReference type="STRING" id="3702.Q8VWQ5"/>
<dbReference type="PaxDb" id="3702-AT5G26170.1"/>
<dbReference type="ProteomicsDB" id="246441"/>
<dbReference type="EnsemblPlants" id="AT5G26170.1">
    <property type="protein sequence ID" value="AT5G26170.1"/>
    <property type="gene ID" value="AT5G26170"/>
</dbReference>
<dbReference type="GeneID" id="832686"/>
<dbReference type="Gramene" id="AT5G26170.1">
    <property type="protein sequence ID" value="AT5G26170.1"/>
    <property type="gene ID" value="AT5G26170"/>
</dbReference>
<dbReference type="KEGG" id="ath:AT5G26170"/>
<dbReference type="Araport" id="AT5G26170"/>
<dbReference type="TAIR" id="AT5G26170">
    <property type="gene designation" value="WRKY50"/>
</dbReference>
<dbReference type="eggNOG" id="ENOG502S01U">
    <property type="taxonomic scope" value="Eukaryota"/>
</dbReference>
<dbReference type="HOGENOM" id="CLU_073202_3_1_1"/>
<dbReference type="InParanoid" id="Q8VWQ5"/>
<dbReference type="OMA" id="ESPCANA"/>
<dbReference type="OrthoDB" id="693960at2759"/>
<dbReference type="PhylomeDB" id="Q8VWQ5"/>
<dbReference type="PRO" id="PR:Q8VWQ5"/>
<dbReference type="Proteomes" id="UP000006548">
    <property type="component" value="Chromosome 5"/>
</dbReference>
<dbReference type="ExpressionAtlas" id="Q8VWQ5">
    <property type="expression patterns" value="baseline and differential"/>
</dbReference>
<dbReference type="GO" id="GO:0005634">
    <property type="term" value="C:nucleus"/>
    <property type="evidence" value="ECO:0007669"/>
    <property type="project" value="UniProtKB-SubCell"/>
</dbReference>
<dbReference type="GO" id="GO:0003700">
    <property type="term" value="F:DNA-binding transcription factor activity"/>
    <property type="evidence" value="ECO:0000250"/>
    <property type="project" value="TAIR"/>
</dbReference>
<dbReference type="GO" id="GO:0043565">
    <property type="term" value="F:sequence-specific DNA binding"/>
    <property type="evidence" value="ECO:0007669"/>
    <property type="project" value="InterPro"/>
</dbReference>
<dbReference type="GO" id="GO:0050832">
    <property type="term" value="P:defense response to fungus"/>
    <property type="evidence" value="ECO:0000316"/>
    <property type="project" value="TAIR"/>
</dbReference>
<dbReference type="GO" id="GO:0009867">
    <property type="term" value="P:jasmonic acid mediated signaling pathway"/>
    <property type="evidence" value="ECO:0000316"/>
    <property type="project" value="TAIR"/>
</dbReference>
<dbReference type="FunFam" id="2.20.25.80:FF:000003">
    <property type="entry name" value="WRKY transcription factor 57"/>
    <property type="match status" value="1"/>
</dbReference>
<dbReference type="Gene3D" id="2.20.25.80">
    <property type="entry name" value="WRKY domain"/>
    <property type="match status" value="1"/>
</dbReference>
<dbReference type="InterPro" id="IPR003657">
    <property type="entry name" value="WRKY_dom"/>
</dbReference>
<dbReference type="InterPro" id="IPR036576">
    <property type="entry name" value="WRKY_dom_sf"/>
</dbReference>
<dbReference type="InterPro" id="IPR044810">
    <property type="entry name" value="WRKY_plant"/>
</dbReference>
<dbReference type="PANTHER" id="PTHR31221:SF112">
    <property type="entry name" value="WRKY TRANSCRIPTION FACTOR 50-RELATED"/>
    <property type="match status" value="1"/>
</dbReference>
<dbReference type="PANTHER" id="PTHR31221">
    <property type="entry name" value="WRKY TRANSCRIPTION FACTOR PROTEIN 1-RELATED"/>
    <property type="match status" value="1"/>
</dbReference>
<dbReference type="Pfam" id="PF03106">
    <property type="entry name" value="WRKY"/>
    <property type="match status" value="1"/>
</dbReference>
<dbReference type="SMART" id="SM00774">
    <property type="entry name" value="WRKY"/>
    <property type="match status" value="1"/>
</dbReference>
<dbReference type="SUPFAM" id="SSF118290">
    <property type="entry name" value="WRKY DNA-binding domain"/>
    <property type="match status" value="1"/>
</dbReference>
<dbReference type="PROSITE" id="PS50811">
    <property type="entry name" value="WRKY"/>
    <property type="match status" value="1"/>
</dbReference>
<name>WRK50_ARATH</name>
<organism>
    <name type="scientific">Arabidopsis thaliana</name>
    <name type="common">Mouse-ear cress</name>
    <dbReference type="NCBI Taxonomy" id="3702"/>
    <lineage>
        <taxon>Eukaryota</taxon>
        <taxon>Viridiplantae</taxon>
        <taxon>Streptophyta</taxon>
        <taxon>Embryophyta</taxon>
        <taxon>Tracheophyta</taxon>
        <taxon>Spermatophyta</taxon>
        <taxon>Magnoliopsida</taxon>
        <taxon>eudicotyledons</taxon>
        <taxon>Gunneridae</taxon>
        <taxon>Pentapetalae</taxon>
        <taxon>rosids</taxon>
        <taxon>malvids</taxon>
        <taxon>Brassicales</taxon>
        <taxon>Brassicaceae</taxon>
        <taxon>Camelineae</taxon>
        <taxon>Arabidopsis</taxon>
    </lineage>
</organism>
<gene>
    <name type="primary">WRKY50</name>
    <name type="ordered locus">At5g26170</name>
    <name type="ORF">T19G15.20</name>
</gene>
<feature type="chain" id="PRO_0000133691" description="Probable WRKY transcription factor 50">
    <location>
        <begin position="1"/>
        <end position="173"/>
    </location>
</feature>
<feature type="DNA-binding region" description="WRKY" evidence="2">
    <location>
        <begin position="107"/>
        <end position="172"/>
    </location>
</feature>
<sequence length="173" mass="19291">MNDADTNLGSSFSDDTHSVFEFPELDLSDEWMDDDLVSAVSGMNQSYGYQTSDVAGALFSGSSSCFSHPESPSTKTYVAATATASADNQNKKEKKKIKGRVAFKTRSEVEVLDDGFKWRKYGKKMVKNSPHPRNYYKCSVDGCPVKKRVERDRDDPSFVITTYEGSHNHSSMN</sequence>
<keyword id="KW-0238">DNA-binding</keyword>
<keyword id="KW-0539">Nucleus</keyword>
<keyword id="KW-1185">Reference proteome</keyword>
<keyword id="KW-0804">Transcription</keyword>
<keyword id="KW-0805">Transcription regulation</keyword>
<evidence type="ECO:0000250" key="1"/>
<evidence type="ECO:0000255" key="2">
    <source>
        <dbReference type="PROSITE-ProRule" id="PRU00223"/>
    </source>
</evidence>
<evidence type="ECO:0000305" key="3"/>
<accession>Q8VWQ5</accession>
<comment type="function">
    <text evidence="1">Transcription factor. Interacts specifically with the W box (5'-(T)TGAC[CT]-3'), a frequently occurring elicitor-responsive cis-acting element (By similarity).</text>
</comment>
<comment type="subcellular location">
    <subcellularLocation>
        <location evidence="3">Nucleus</location>
    </subcellularLocation>
</comment>
<comment type="similarity">
    <text evidence="3">Belongs to the WRKY group II-c family.</text>
</comment>
<proteinExistence type="evidence at transcript level"/>
<reference key="1">
    <citation type="submission" date="2001-12" db="EMBL/GenBank/DDBJ databases">
        <title>Arabidopsis thaliana transcription factor WRKY50.</title>
        <authorList>
            <person name="Ulker B."/>
            <person name="Kushnir S."/>
            <person name="Somssich I.E."/>
        </authorList>
    </citation>
    <scope>NUCLEOTIDE SEQUENCE [MRNA]</scope>
    <source>
        <strain>cv. Columbia</strain>
        <tissue>Flower</tissue>
    </source>
</reference>
<reference key="2">
    <citation type="journal article" date="2000" name="Nature">
        <title>Sequence and analysis of chromosome 5 of the plant Arabidopsis thaliana.</title>
        <authorList>
            <person name="Tabata S."/>
            <person name="Kaneko T."/>
            <person name="Nakamura Y."/>
            <person name="Kotani H."/>
            <person name="Kato T."/>
            <person name="Asamizu E."/>
            <person name="Miyajima N."/>
            <person name="Sasamoto S."/>
            <person name="Kimura T."/>
            <person name="Hosouchi T."/>
            <person name="Kawashima K."/>
            <person name="Kohara M."/>
            <person name="Matsumoto M."/>
            <person name="Matsuno A."/>
            <person name="Muraki A."/>
            <person name="Nakayama S."/>
            <person name="Nakazaki N."/>
            <person name="Naruo K."/>
            <person name="Okumura S."/>
            <person name="Shinpo S."/>
            <person name="Takeuchi C."/>
            <person name="Wada T."/>
            <person name="Watanabe A."/>
            <person name="Yamada M."/>
            <person name="Yasuda M."/>
            <person name="Sato S."/>
            <person name="de la Bastide M."/>
            <person name="Huang E."/>
            <person name="Spiegel L."/>
            <person name="Gnoj L."/>
            <person name="O'Shaughnessy A."/>
            <person name="Preston R."/>
            <person name="Habermann K."/>
            <person name="Murray J."/>
            <person name="Johnson D."/>
            <person name="Rohlfing T."/>
            <person name="Nelson J."/>
            <person name="Stoneking T."/>
            <person name="Pepin K."/>
            <person name="Spieth J."/>
            <person name="Sekhon M."/>
            <person name="Armstrong J."/>
            <person name="Becker M."/>
            <person name="Belter E."/>
            <person name="Cordum H."/>
            <person name="Cordes M."/>
            <person name="Courtney L."/>
            <person name="Courtney W."/>
            <person name="Dante M."/>
            <person name="Du H."/>
            <person name="Edwards J."/>
            <person name="Fryman J."/>
            <person name="Haakensen B."/>
            <person name="Lamar E."/>
            <person name="Latreille P."/>
            <person name="Leonard S."/>
            <person name="Meyer R."/>
            <person name="Mulvaney E."/>
            <person name="Ozersky P."/>
            <person name="Riley A."/>
            <person name="Strowmatt C."/>
            <person name="Wagner-McPherson C."/>
            <person name="Wollam A."/>
            <person name="Yoakum M."/>
            <person name="Bell M."/>
            <person name="Dedhia N."/>
            <person name="Parnell L."/>
            <person name="Shah R."/>
            <person name="Rodriguez M."/>
            <person name="Hoon See L."/>
            <person name="Vil D."/>
            <person name="Baker J."/>
            <person name="Kirchoff K."/>
            <person name="Toth K."/>
            <person name="King L."/>
            <person name="Bahret A."/>
            <person name="Miller B."/>
            <person name="Marra M.A."/>
            <person name="Martienssen R."/>
            <person name="McCombie W.R."/>
            <person name="Wilson R.K."/>
            <person name="Murphy G."/>
            <person name="Bancroft I."/>
            <person name="Volckaert G."/>
            <person name="Wambutt R."/>
            <person name="Duesterhoeft A."/>
            <person name="Stiekema W."/>
            <person name="Pohl T."/>
            <person name="Entian K.-D."/>
            <person name="Terryn N."/>
            <person name="Hartley N."/>
            <person name="Bent E."/>
            <person name="Johnson S."/>
            <person name="Langham S.-A."/>
            <person name="McCullagh B."/>
            <person name="Robben J."/>
            <person name="Grymonprez B."/>
            <person name="Zimmermann W."/>
            <person name="Ramsperger U."/>
            <person name="Wedler H."/>
            <person name="Balke K."/>
            <person name="Wedler E."/>
            <person name="Peters S."/>
            <person name="van Staveren M."/>
            <person name="Dirkse W."/>
            <person name="Mooijman P."/>
            <person name="Klein Lankhorst R."/>
            <person name="Weitzenegger T."/>
            <person name="Bothe G."/>
            <person name="Rose M."/>
            <person name="Hauf J."/>
            <person name="Berneiser S."/>
            <person name="Hempel S."/>
            <person name="Feldpausch M."/>
            <person name="Lamberth S."/>
            <person name="Villarroel R."/>
            <person name="Gielen J."/>
            <person name="Ardiles W."/>
            <person name="Bents O."/>
            <person name="Lemcke K."/>
            <person name="Kolesov G."/>
            <person name="Mayer K.F.X."/>
            <person name="Rudd S."/>
            <person name="Schoof H."/>
            <person name="Schueller C."/>
            <person name="Zaccaria P."/>
            <person name="Mewes H.-W."/>
            <person name="Bevan M."/>
            <person name="Fransz P.F."/>
        </authorList>
    </citation>
    <scope>NUCLEOTIDE SEQUENCE [LARGE SCALE GENOMIC DNA]</scope>
    <source>
        <strain>cv. Columbia</strain>
    </source>
</reference>
<reference key="3">
    <citation type="journal article" date="2017" name="Plant J.">
        <title>Araport11: a complete reannotation of the Arabidopsis thaliana reference genome.</title>
        <authorList>
            <person name="Cheng C.Y."/>
            <person name="Krishnakumar V."/>
            <person name="Chan A.P."/>
            <person name="Thibaud-Nissen F."/>
            <person name="Schobel S."/>
            <person name="Town C.D."/>
        </authorList>
    </citation>
    <scope>GENOME REANNOTATION</scope>
    <source>
        <strain>cv. Columbia</strain>
    </source>
</reference>